<name>ISPE_AGRFC</name>
<accession>Q8UHP8</accession>
<protein>
    <recommendedName>
        <fullName evidence="1">4-diphosphocytidyl-2-C-methyl-D-erythritol kinase</fullName>
        <shortName evidence="1">CMK</shortName>
        <ecNumber evidence="1">2.7.1.148</ecNumber>
    </recommendedName>
    <alternativeName>
        <fullName evidence="1">4-(cytidine-5'-diphospho)-2-C-methyl-D-erythritol kinase</fullName>
    </alternativeName>
</protein>
<organism>
    <name type="scientific">Agrobacterium fabrum (strain C58 / ATCC 33970)</name>
    <name type="common">Agrobacterium tumefaciens (strain C58)</name>
    <dbReference type="NCBI Taxonomy" id="176299"/>
    <lineage>
        <taxon>Bacteria</taxon>
        <taxon>Pseudomonadati</taxon>
        <taxon>Pseudomonadota</taxon>
        <taxon>Alphaproteobacteria</taxon>
        <taxon>Hyphomicrobiales</taxon>
        <taxon>Rhizobiaceae</taxon>
        <taxon>Rhizobium/Agrobacterium group</taxon>
        <taxon>Agrobacterium</taxon>
        <taxon>Agrobacterium tumefaciens complex</taxon>
    </lineage>
</organism>
<reference key="1">
    <citation type="journal article" date="2001" name="Science">
        <title>The genome of the natural genetic engineer Agrobacterium tumefaciens C58.</title>
        <authorList>
            <person name="Wood D.W."/>
            <person name="Setubal J.C."/>
            <person name="Kaul R."/>
            <person name="Monks D.E."/>
            <person name="Kitajima J.P."/>
            <person name="Okura V.K."/>
            <person name="Zhou Y."/>
            <person name="Chen L."/>
            <person name="Wood G.E."/>
            <person name="Almeida N.F. Jr."/>
            <person name="Woo L."/>
            <person name="Chen Y."/>
            <person name="Paulsen I.T."/>
            <person name="Eisen J.A."/>
            <person name="Karp P.D."/>
            <person name="Bovee D. Sr."/>
            <person name="Chapman P."/>
            <person name="Clendenning J."/>
            <person name="Deatherage G."/>
            <person name="Gillet W."/>
            <person name="Grant C."/>
            <person name="Kutyavin T."/>
            <person name="Levy R."/>
            <person name="Li M.-J."/>
            <person name="McClelland E."/>
            <person name="Palmieri A."/>
            <person name="Raymond C."/>
            <person name="Rouse G."/>
            <person name="Saenphimmachak C."/>
            <person name="Wu Z."/>
            <person name="Romero P."/>
            <person name="Gordon D."/>
            <person name="Zhang S."/>
            <person name="Yoo H."/>
            <person name="Tao Y."/>
            <person name="Biddle P."/>
            <person name="Jung M."/>
            <person name="Krespan W."/>
            <person name="Perry M."/>
            <person name="Gordon-Kamm B."/>
            <person name="Liao L."/>
            <person name="Kim S."/>
            <person name="Hendrick C."/>
            <person name="Zhao Z.-Y."/>
            <person name="Dolan M."/>
            <person name="Chumley F."/>
            <person name="Tingey S.V."/>
            <person name="Tomb J.-F."/>
            <person name="Gordon M.P."/>
            <person name="Olson M.V."/>
            <person name="Nester E.W."/>
        </authorList>
    </citation>
    <scope>NUCLEOTIDE SEQUENCE [LARGE SCALE GENOMIC DNA]</scope>
    <source>
        <strain>C58 / ATCC 33970</strain>
    </source>
</reference>
<reference key="2">
    <citation type="journal article" date="2001" name="Science">
        <title>Genome sequence of the plant pathogen and biotechnology agent Agrobacterium tumefaciens C58.</title>
        <authorList>
            <person name="Goodner B."/>
            <person name="Hinkle G."/>
            <person name="Gattung S."/>
            <person name="Miller N."/>
            <person name="Blanchard M."/>
            <person name="Qurollo B."/>
            <person name="Goldman B.S."/>
            <person name="Cao Y."/>
            <person name="Askenazi M."/>
            <person name="Halling C."/>
            <person name="Mullin L."/>
            <person name="Houmiel K."/>
            <person name="Gordon J."/>
            <person name="Vaudin M."/>
            <person name="Iartchouk O."/>
            <person name="Epp A."/>
            <person name="Liu F."/>
            <person name="Wollam C."/>
            <person name="Allinger M."/>
            <person name="Doughty D."/>
            <person name="Scott C."/>
            <person name="Lappas C."/>
            <person name="Markelz B."/>
            <person name="Flanagan C."/>
            <person name="Crowell C."/>
            <person name="Gurson J."/>
            <person name="Lomo C."/>
            <person name="Sear C."/>
            <person name="Strub G."/>
            <person name="Cielo C."/>
            <person name="Slater S."/>
        </authorList>
    </citation>
    <scope>NUCLEOTIDE SEQUENCE [LARGE SCALE GENOMIC DNA]</scope>
    <source>
        <strain>C58 / ATCC 33970</strain>
    </source>
</reference>
<sequence length="299" mass="31784">MRLHEVSGATETVEAAPAKINLALHVTGQRADGYHLLETLVTFTAAGDMIRIRDAATDSFSISGPFGDLLSAGDSGDNLVTRARDILRDALASTGQPARPVDIHLEKNLPVASGIGGGSADAAATLRGLLRHWDAAIAPEKLKSLALKLGADVPMCLASRPLIARGIGEDIEALTDLPELSMVLANPLKAVSTPEIFRRLQNKVNPHLPTPSTIGWATTGWMDFLAQSRNDLQPPAQALLPEIGEITGLLSEEGATLVRMSGSGATCFGIFHSFDAAKNAETSLRKKRPGWYFHATRTI</sequence>
<gene>
    <name evidence="1" type="primary">ispE</name>
    <name type="synonym">ipk</name>
    <name type="ordered locus">Atu0632</name>
    <name type="ORF">AGR_C_1122</name>
</gene>
<proteinExistence type="inferred from homology"/>
<evidence type="ECO:0000255" key="1">
    <source>
        <dbReference type="HAMAP-Rule" id="MF_00061"/>
    </source>
</evidence>
<comment type="function">
    <text evidence="1">Catalyzes the phosphorylation of the position 2 hydroxy group of 4-diphosphocytidyl-2C-methyl-D-erythritol.</text>
</comment>
<comment type="catalytic activity">
    <reaction evidence="1">
        <text>4-CDP-2-C-methyl-D-erythritol + ATP = 4-CDP-2-C-methyl-D-erythritol 2-phosphate + ADP + H(+)</text>
        <dbReference type="Rhea" id="RHEA:18437"/>
        <dbReference type="ChEBI" id="CHEBI:15378"/>
        <dbReference type="ChEBI" id="CHEBI:30616"/>
        <dbReference type="ChEBI" id="CHEBI:57823"/>
        <dbReference type="ChEBI" id="CHEBI:57919"/>
        <dbReference type="ChEBI" id="CHEBI:456216"/>
        <dbReference type="EC" id="2.7.1.148"/>
    </reaction>
</comment>
<comment type="pathway">
    <text evidence="1">Isoprenoid biosynthesis; isopentenyl diphosphate biosynthesis via DXP pathway; isopentenyl diphosphate from 1-deoxy-D-xylulose 5-phosphate: step 3/6.</text>
</comment>
<comment type="similarity">
    <text evidence="1">Belongs to the GHMP kinase family. IspE subfamily.</text>
</comment>
<dbReference type="EC" id="2.7.1.148" evidence="1"/>
<dbReference type="EMBL" id="AE007869">
    <property type="protein sequence ID" value="AAK86439.1"/>
    <property type="molecule type" value="Genomic_DNA"/>
</dbReference>
<dbReference type="PIR" id="AB2654">
    <property type="entry name" value="AB2654"/>
</dbReference>
<dbReference type="PIR" id="F97435">
    <property type="entry name" value="F97435"/>
</dbReference>
<dbReference type="RefSeq" id="NP_353654.1">
    <property type="nucleotide sequence ID" value="NC_003062.2"/>
</dbReference>
<dbReference type="RefSeq" id="WP_010971024.1">
    <property type="nucleotide sequence ID" value="NC_003062.2"/>
</dbReference>
<dbReference type="SMR" id="Q8UHP8"/>
<dbReference type="STRING" id="176299.Atu0632"/>
<dbReference type="EnsemblBacteria" id="AAK86439">
    <property type="protein sequence ID" value="AAK86439"/>
    <property type="gene ID" value="Atu0632"/>
</dbReference>
<dbReference type="GeneID" id="1132670"/>
<dbReference type="KEGG" id="atu:Atu0632"/>
<dbReference type="PATRIC" id="fig|176299.10.peg.624"/>
<dbReference type="eggNOG" id="COG1947">
    <property type="taxonomic scope" value="Bacteria"/>
</dbReference>
<dbReference type="HOGENOM" id="CLU_053057_1_0_5"/>
<dbReference type="OrthoDB" id="9809438at2"/>
<dbReference type="PhylomeDB" id="Q8UHP8"/>
<dbReference type="BioCyc" id="AGRO:ATU0632-MONOMER"/>
<dbReference type="UniPathway" id="UPA00056">
    <property type="reaction ID" value="UER00094"/>
</dbReference>
<dbReference type="Proteomes" id="UP000000813">
    <property type="component" value="Chromosome circular"/>
</dbReference>
<dbReference type="GO" id="GO:0050515">
    <property type="term" value="F:4-(cytidine 5'-diphospho)-2-C-methyl-D-erythritol kinase activity"/>
    <property type="evidence" value="ECO:0007669"/>
    <property type="project" value="UniProtKB-UniRule"/>
</dbReference>
<dbReference type="GO" id="GO:0005524">
    <property type="term" value="F:ATP binding"/>
    <property type="evidence" value="ECO:0007669"/>
    <property type="project" value="UniProtKB-UniRule"/>
</dbReference>
<dbReference type="GO" id="GO:0019288">
    <property type="term" value="P:isopentenyl diphosphate biosynthetic process, methylerythritol 4-phosphate pathway"/>
    <property type="evidence" value="ECO:0007669"/>
    <property type="project" value="UniProtKB-UniRule"/>
</dbReference>
<dbReference type="GO" id="GO:0016114">
    <property type="term" value="P:terpenoid biosynthetic process"/>
    <property type="evidence" value="ECO:0007669"/>
    <property type="project" value="InterPro"/>
</dbReference>
<dbReference type="Gene3D" id="3.30.230.10">
    <property type="match status" value="1"/>
</dbReference>
<dbReference type="Gene3D" id="3.30.70.890">
    <property type="entry name" value="GHMP kinase, C-terminal domain"/>
    <property type="match status" value="1"/>
</dbReference>
<dbReference type="HAMAP" id="MF_00061">
    <property type="entry name" value="IspE"/>
    <property type="match status" value="1"/>
</dbReference>
<dbReference type="InterPro" id="IPR013750">
    <property type="entry name" value="GHMP_kinase_C_dom"/>
</dbReference>
<dbReference type="InterPro" id="IPR036554">
    <property type="entry name" value="GHMP_kinase_C_sf"/>
</dbReference>
<dbReference type="InterPro" id="IPR006204">
    <property type="entry name" value="GHMP_kinase_N_dom"/>
</dbReference>
<dbReference type="InterPro" id="IPR004424">
    <property type="entry name" value="IspE"/>
</dbReference>
<dbReference type="InterPro" id="IPR020568">
    <property type="entry name" value="Ribosomal_Su5_D2-typ_SF"/>
</dbReference>
<dbReference type="InterPro" id="IPR014721">
    <property type="entry name" value="Ribsml_uS5_D2-typ_fold_subgr"/>
</dbReference>
<dbReference type="NCBIfam" id="TIGR00154">
    <property type="entry name" value="ispE"/>
    <property type="match status" value="1"/>
</dbReference>
<dbReference type="NCBIfam" id="NF011202">
    <property type="entry name" value="PRK14608.1"/>
    <property type="match status" value="1"/>
</dbReference>
<dbReference type="PANTHER" id="PTHR43527">
    <property type="entry name" value="4-DIPHOSPHOCYTIDYL-2-C-METHYL-D-ERYTHRITOL KINASE, CHLOROPLASTIC"/>
    <property type="match status" value="1"/>
</dbReference>
<dbReference type="PANTHER" id="PTHR43527:SF2">
    <property type="entry name" value="4-DIPHOSPHOCYTIDYL-2-C-METHYL-D-ERYTHRITOL KINASE, CHLOROPLASTIC"/>
    <property type="match status" value="1"/>
</dbReference>
<dbReference type="Pfam" id="PF08544">
    <property type="entry name" value="GHMP_kinases_C"/>
    <property type="match status" value="1"/>
</dbReference>
<dbReference type="Pfam" id="PF00288">
    <property type="entry name" value="GHMP_kinases_N"/>
    <property type="match status" value="1"/>
</dbReference>
<dbReference type="PIRSF" id="PIRSF010376">
    <property type="entry name" value="IspE"/>
    <property type="match status" value="1"/>
</dbReference>
<dbReference type="SUPFAM" id="SSF55060">
    <property type="entry name" value="GHMP Kinase, C-terminal domain"/>
    <property type="match status" value="1"/>
</dbReference>
<dbReference type="SUPFAM" id="SSF54211">
    <property type="entry name" value="Ribosomal protein S5 domain 2-like"/>
    <property type="match status" value="1"/>
</dbReference>
<feature type="chain" id="PRO_0000189181" description="4-diphosphocytidyl-2-C-methyl-D-erythritol kinase">
    <location>
        <begin position="1"/>
        <end position="299"/>
    </location>
</feature>
<feature type="active site" evidence="1">
    <location>
        <position position="19"/>
    </location>
</feature>
<feature type="active site" evidence="1">
    <location>
        <position position="152"/>
    </location>
</feature>
<feature type="binding site" evidence="1">
    <location>
        <begin position="110"/>
        <end position="120"/>
    </location>
    <ligand>
        <name>ATP</name>
        <dbReference type="ChEBI" id="CHEBI:30616"/>
    </ligand>
</feature>
<keyword id="KW-0067">ATP-binding</keyword>
<keyword id="KW-0414">Isoprene biosynthesis</keyword>
<keyword id="KW-0418">Kinase</keyword>
<keyword id="KW-0547">Nucleotide-binding</keyword>
<keyword id="KW-1185">Reference proteome</keyword>
<keyword id="KW-0808">Transferase</keyword>